<sequence length="252" mass="26874">MLAKRIIPCLDVKEGRVVKGVNFIGLQDVGDPVEIAALYNDAGADEIVFLDITATHEGRKTIIDVVEKTASKVFIPLTVGGGISSVKDMYNLLRAGADKVSINSAAVRNPKLIEEGAQHFGSQCIVVAIDARKVAEGKWNVYVNGGRVDTGMDAIGWAKRVVMLGAGEILLTSMDADGTKNGYDLRLTEEISKSVSIPVIASGGCGHADHIIEVFQKTTVDAALAASIFHYGEATIGDVKRKLRNANVEVRL</sequence>
<feature type="chain" id="PRO_1000148902" description="Imidazole glycerol phosphate synthase subunit HisF">
    <location>
        <begin position="1"/>
        <end position="252"/>
    </location>
</feature>
<feature type="active site" evidence="1">
    <location>
        <position position="11"/>
    </location>
</feature>
<feature type="active site" evidence="1">
    <location>
        <position position="130"/>
    </location>
</feature>
<accession>C3L9P7</accession>
<dbReference type="EC" id="4.3.2.10" evidence="1"/>
<dbReference type="EMBL" id="CP001215">
    <property type="protein sequence ID" value="ACP17490.1"/>
    <property type="molecule type" value="Genomic_DNA"/>
</dbReference>
<dbReference type="RefSeq" id="WP_000880088.1">
    <property type="nucleotide sequence ID" value="NC_012581.1"/>
</dbReference>
<dbReference type="SMR" id="C3L9P7"/>
<dbReference type="GeneID" id="45021409"/>
<dbReference type="KEGG" id="bah:BAMEG_3165"/>
<dbReference type="HOGENOM" id="CLU_048577_4_0_9"/>
<dbReference type="UniPathway" id="UPA00031">
    <property type="reaction ID" value="UER00010"/>
</dbReference>
<dbReference type="GO" id="GO:0005737">
    <property type="term" value="C:cytoplasm"/>
    <property type="evidence" value="ECO:0007669"/>
    <property type="project" value="UniProtKB-SubCell"/>
</dbReference>
<dbReference type="GO" id="GO:0000107">
    <property type="term" value="F:imidazoleglycerol-phosphate synthase activity"/>
    <property type="evidence" value="ECO:0007669"/>
    <property type="project" value="UniProtKB-UniRule"/>
</dbReference>
<dbReference type="GO" id="GO:0016829">
    <property type="term" value="F:lyase activity"/>
    <property type="evidence" value="ECO:0007669"/>
    <property type="project" value="UniProtKB-KW"/>
</dbReference>
<dbReference type="GO" id="GO:0000105">
    <property type="term" value="P:L-histidine biosynthetic process"/>
    <property type="evidence" value="ECO:0007669"/>
    <property type="project" value="UniProtKB-UniRule"/>
</dbReference>
<dbReference type="CDD" id="cd04731">
    <property type="entry name" value="HisF"/>
    <property type="match status" value="1"/>
</dbReference>
<dbReference type="FunFam" id="3.20.20.70:FF:000006">
    <property type="entry name" value="Imidazole glycerol phosphate synthase subunit HisF"/>
    <property type="match status" value="1"/>
</dbReference>
<dbReference type="Gene3D" id="3.20.20.70">
    <property type="entry name" value="Aldolase class I"/>
    <property type="match status" value="1"/>
</dbReference>
<dbReference type="HAMAP" id="MF_01013">
    <property type="entry name" value="HisF"/>
    <property type="match status" value="1"/>
</dbReference>
<dbReference type="InterPro" id="IPR013785">
    <property type="entry name" value="Aldolase_TIM"/>
</dbReference>
<dbReference type="InterPro" id="IPR006062">
    <property type="entry name" value="His_biosynth"/>
</dbReference>
<dbReference type="InterPro" id="IPR004651">
    <property type="entry name" value="HisF"/>
</dbReference>
<dbReference type="InterPro" id="IPR050064">
    <property type="entry name" value="IGPS_HisA/HisF"/>
</dbReference>
<dbReference type="InterPro" id="IPR011060">
    <property type="entry name" value="RibuloseP-bd_barrel"/>
</dbReference>
<dbReference type="NCBIfam" id="TIGR00735">
    <property type="entry name" value="hisF"/>
    <property type="match status" value="1"/>
</dbReference>
<dbReference type="PANTHER" id="PTHR21235:SF2">
    <property type="entry name" value="IMIDAZOLE GLYCEROL PHOSPHATE SYNTHASE HISHF"/>
    <property type="match status" value="1"/>
</dbReference>
<dbReference type="PANTHER" id="PTHR21235">
    <property type="entry name" value="IMIDAZOLE GLYCEROL PHOSPHATE SYNTHASE SUBUNIT HISF/H IGP SYNTHASE SUBUNIT HISF/H"/>
    <property type="match status" value="1"/>
</dbReference>
<dbReference type="Pfam" id="PF00977">
    <property type="entry name" value="His_biosynth"/>
    <property type="match status" value="1"/>
</dbReference>
<dbReference type="SUPFAM" id="SSF51366">
    <property type="entry name" value="Ribulose-phoshate binding barrel"/>
    <property type="match status" value="1"/>
</dbReference>
<protein>
    <recommendedName>
        <fullName evidence="1">Imidazole glycerol phosphate synthase subunit HisF</fullName>
        <ecNumber evidence="1">4.3.2.10</ecNumber>
    </recommendedName>
    <alternativeName>
        <fullName evidence="1">IGP synthase cyclase subunit</fullName>
    </alternativeName>
    <alternativeName>
        <fullName evidence="1">IGP synthase subunit HisF</fullName>
    </alternativeName>
    <alternativeName>
        <fullName evidence="1">ImGP synthase subunit HisF</fullName>
        <shortName evidence="1">IGPS subunit HisF</shortName>
    </alternativeName>
</protein>
<evidence type="ECO:0000255" key="1">
    <source>
        <dbReference type="HAMAP-Rule" id="MF_01013"/>
    </source>
</evidence>
<keyword id="KW-0028">Amino-acid biosynthesis</keyword>
<keyword id="KW-0963">Cytoplasm</keyword>
<keyword id="KW-0368">Histidine biosynthesis</keyword>
<keyword id="KW-0456">Lyase</keyword>
<organism>
    <name type="scientific">Bacillus anthracis (strain CDC 684 / NRRL 3495)</name>
    <dbReference type="NCBI Taxonomy" id="568206"/>
    <lineage>
        <taxon>Bacteria</taxon>
        <taxon>Bacillati</taxon>
        <taxon>Bacillota</taxon>
        <taxon>Bacilli</taxon>
        <taxon>Bacillales</taxon>
        <taxon>Bacillaceae</taxon>
        <taxon>Bacillus</taxon>
        <taxon>Bacillus cereus group</taxon>
    </lineage>
</organism>
<reference key="1">
    <citation type="submission" date="2008-10" db="EMBL/GenBank/DDBJ databases">
        <title>Genome sequence of Bacillus anthracis str. CDC 684.</title>
        <authorList>
            <person name="Dodson R.J."/>
            <person name="Munk A.C."/>
            <person name="Brettin T."/>
            <person name="Bruce D."/>
            <person name="Detter C."/>
            <person name="Tapia R."/>
            <person name="Han C."/>
            <person name="Sutton G."/>
            <person name="Sims D."/>
        </authorList>
    </citation>
    <scope>NUCLEOTIDE SEQUENCE [LARGE SCALE GENOMIC DNA]</scope>
    <source>
        <strain>CDC 684 / NRRL 3495</strain>
    </source>
</reference>
<comment type="function">
    <text evidence="1">IGPS catalyzes the conversion of PRFAR and glutamine to IGP, AICAR and glutamate. The HisF subunit catalyzes the cyclization activity that produces IGP and AICAR from PRFAR using the ammonia provided by the HisH subunit.</text>
</comment>
<comment type="catalytic activity">
    <reaction evidence="1">
        <text>5-[(5-phospho-1-deoxy-D-ribulos-1-ylimino)methylamino]-1-(5-phospho-beta-D-ribosyl)imidazole-4-carboxamide + L-glutamine = D-erythro-1-(imidazol-4-yl)glycerol 3-phosphate + 5-amino-1-(5-phospho-beta-D-ribosyl)imidazole-4-carboxamide + L-glutamate + H(+)</text>
        <dbReference type="Rhea" id="RHEA:24793"/>
        <dbReference type="ChEBI" id="CHEBI:15378"/>
        <dbReference type="ChEBI" id="CHEBI:29985"/>
        <dbReference type="ChEBI" id="CHEBI:58278"/>
        <dbReference type="ChEBI" id="CHEBI:58359"/>
        <dbReference type="ChEBI" id="CHEBI:58475"/>
        <dbReference type="ChEBI" id="CHEBI:58525"/>
        <dbReference type="EC" id="4.3.2.10"/>
    </reaction>
</comment>
<comment type="pathway">
    <text evidence="1">Amino-acid biosynthesis; L-histidine biosynthesis; L-histidine from 5-phospho-alpha-D-ribose 1-diphosphate: step 5/9.</text>
</comment>
<comment type="subunit">
    <text evidence="1">Heterodimer of HisH and HisF.</text>
</comment>
<comment type="subcellular location">
    <subcellularLocation>
        <location evidence="1">Cytoplasm</location>
    </subcellularLocation>
</comment>
<comment type="similarity">
    <text evidence="1">Belongs to the HisA/HisF family.</text>
</comment>
<proteinExistence type="inferred from homology"/>
<name>HIS6_BACAC</name>
<gene>
    <name evidence="1" type="primary">hisF</name>
    <name type="ordered locus">BAMEG_3165</name>
</gene>